<accession>Q9FJ87</accession>
<accession>Q7FLS2</accession>
<comment type="function">
    <text evidence="2 3">Functions as a multidrug and toxin extrusion transporter in the export of abscisic acid (ABA) in guard cells. Plays a role in ABA-mediated growth inhibition and responses to drought conditions (PubMed:24851876). May act as a negative regulator of hypocotyl cell elongation in the light (PubMed:26160579).</text>
</comment>
<comment type="subcellular location">
    <subcellularLocation>
        <location evidence="2">Cell membrane</location>
        <topology evidence="2">Multi-pass membrane protein</topology>
    </subcellularLocation>
    <subcellularLocation>
        <location evidence="3">Late endosome membrane</location>
        <topology evidence="3">Multi-pass membrane protein</topology>
    </subcellularLocation>
</comment>
<comment type="tissue specificity">
    <text evidence="2 3">Preferentially expressed in rosette leaves. Detected mainly in the vascular tissues and guard cells (PubMed:24851876). Mostly detected at reproductive stages in young anthers, in mature pollens and during pollen germination on the pistil. Also expressed in developing seeds (PubMed:26160579).</text>
</comment>
<comment type="induction">
    <text evidence="2">By abscisic acid.</text>
</comment>
<comment type="disruption phenotype">
    <text evidence="2">Smaller and yellowish rosette leaves. Enhanced sensitivity to abscisic acid (ABA) in growth inhibition and seed germination. Accumulation of ABA in leaves. Enhanced tolerance to drought with lower stomatal conductance.</text>
</comment>
<comment type="miscellaneous">
    <text evidence="3">Overexpression of DTX50 alters shoot developmental programs leading to a loss of apical dominance phenotype.</text>
</comment>
<comment type="similarity">
    <text evidence="7">Belongs to the multi antimicrobial extrusion (MATE) (TC 2.A.66.1) family.</text>
</comment>
<evidence type="ECO:0000255" key="1"/>
<evidence type="ECO:0000269" key="2">
    <source>
    </source>
</evidence>
<evidence type="ECO:0000269" key="3">
    <source>
    </source>
</evidence>
<evidence type="ECO:0000303" key="4">
    <source>
    </source>
</evidence>
<evidence type="ECO:0000303" key="5">
    <source>
    </source>
</evidence>
<evidence type="ECO:0000303" key="6">
    <source>
    </source>
</evidence>
<evidence type="ECO:0000305" key="7"/>
<evidence type="ECO:0000312" key="8">
    <source>
        <dbReference type="Araport" id="AT5G52050"/>
    </source>
</evidence>
<evidence type="ECO:0000312" key="9">
    <source>
        <dbReference type="EMBL" id="BAB11053.1"/>
    </source>
</evidence>
<dbReference type="EMBL" id="AB015478">
    <property type="protein sequence ID" value="BAB11053.1"/>
    <property type="molecule type" value="Genomic_DNA"/>
</dbReference>
<dbReference type="EMBL" id="CP002688">
    <property type="protein sequence ID" value="AED96166.1"/>
    <property type="molecule type" value="Genomic_DNA"/>
</dbReference>
<dbReference type="EMBL" id="AK117985">
    <property type="protein sequence ID" value="BAC42620.2"/>
    <property type="molecule type" value="mRNA"/>
</dbReference>
<dbReference type="RefSeq" id="NP_200018.1">
    <property type="nucleotide sequence ID" value="NM_124584.3"/>
</dbReference>
<dbReference type="SMR" id="Q9FJ87"/>
<dbReference type="FunCoup" id="Q9FJ87">
    <property type="interactions" value="7"/>
</dbReference>
<dbReference type="IntAct" id="Q9FJ87">
    <property type="interactions" value="22"/>
</dbReference>
<dbReference type="STRING" id="3702.Q9FJ87"/>
<dbReference type="TCDB" id="2.A.66.1.58">
    <property type="family name" value="the multidrug/oligosaccharidyl-lipid/polysaccharide (mop) flippase superfamily"/>
</dbReference>
<dbReference type="PaxDb" id="3702-AT5G52050.1"/>
<dbReference type="EnsemblPlants" id="AT5G52050.1">
    <property type="protein sequence ID" value="AT5G52050.1"/>
    <property type="gene ID" value="AT5G52050"/>
</dbReference>
<dbReference type="GeneID" id="835280"/>
<dbReference type="Gramene" id="AT5G52050.1">
    <property type="protein sequence ID" value="AT5G52050.1"/>
    <property type="gene ID" value="AT5G52050"/>
</dbReference>
<dbReference type="KEGG" id="ath:AT5G52050"/>
<dbReference type="Araport" id="AT5G52050"/>
<dbReference type="TAIR" id="AT5G52050">
    <property type="gene designation" value="DTX50"/>
</dbReference>
<dbReference type="eggNOG" id="KOG1347">
    <property type="taxonomic scope" value="Eukaryota"/>
</dbReference>
<dbReference type="HOGENOM" id="CLU_012893_1_0_1"/>
<dbReference type="InParanoid" id="Q9FJ87"/>
<dbReference type="OMA" id="AYVYFRG"/>
<dbReference type="OrthoDB" id="2126698at2759"/>
<dbReference type="PhylomeDB" id="Q9FJ87"/>
<dbReference type="PRO" id="PR:Q9FJ87"/>
<dbReference type="Proteomes" id="UP000006548">
    <property type="component" value="Chromosome 5"/>
</dbReference>
<dbReference type="ExpressionAtlas" id="Q9FJ87">
    <property type="expression patterns" value="baseline and differential"/>
</dbReference>
<dbReference type="GO" id="GO:0005770">
    <property type="term" value="C:late endosome"/>
    <property type="evidence" value="ECO:0000314"/>
    <property type="project" value="UniProtKB"/>
</dbReference>
<dbReference type="GO" id="GO:0031902">
    <property type="term" value="C:late endosome membrane"/>
    <property type="evidence" value="ECO:0007669"/>
    <property type="project" value="UniProtKB-SubCell"/>
</dbReference>
<dbReference type="GO" id="GO:0005886">
    <property type="term" value="C:plasma membrane"/>
    <property type="evidence" value="ECO:0000314"/>
    <property type="project" value="UniProtKB"/>
</dbReference>
<dbReference type="GO" id="GO:0090440">
    <property type="term" value="F:abscisic acid transmembrane transporter activity"/>
    <property type="evidence" value="ECO:0000315"/>
    <property type="project" value="UniProtKB"/>
</dbReference>
<dbReference type="GO" id="GO:0015297">
    <property type="term" value="F:antiporter activity"/>
    <property type="evidence" value="ECO:0007669"/>
    <property type="project" value="InterPro"/>
</dbReference>
<dbReference type="GO" id="GO:0042910">
    <property type="term" value="F:xenobiotic transmembrane transporter activity"/>
    <property type="evidence" value="ECO:0007669"/>
    <property type="project" value="InterPro"/>
</dbReference>
<dbReference type="GO" id="GO:0080168">
    <property type="term" value="P:abscisic acid transport"/>
    <property type="evidence" value="ECO:0000315"/>
    <property type="project" value="UniProtKB"/>
</dbReference>
<dbReference type="GO" id="GO:2000070">
    <property type="term" value="P:regulation of response to water deprivation"/>
    <property type="evidence" value="ECO:0000315"/>
    <property type="project" value="UniProtKB"/>
</dbReference>
<dbReference type="GO" id="GO:0009737">
    <property type="term" value="P:response to abscisic acid"/>
    <property type="evidence" value="ECO:0000270"/>
    <property type="project" value="UniProtKB"/>
</dbReference>
<dbReference type="GO" id="GO:0010015">
    <property type="term" value="P:root morphogenesis"/>
    <property type="evidence" value="ECO:0000315"/>
    <property type="project" value="UniProtKB"/>
</dbReference>
<dbReference type="GO" id="GO:1990961">
    <property type="term" value="P:xenobiotic detoxification by transmembrane export across the plasma membrane"/>
    <property type="evidence" value="ECO:0007669"/>
    <property type="project" value="InterPro"/>
</dbReference>
<dbReference type="CDD" id="cd13132">
    <property type="entry name" value="MATE_eukaryotic"/>
    <property type="match status" value="1"/>
</dbReference>
<dbReference type="InterPro" id="IPR045069">
    <property type="entry name" value="MATE_euk"/>
</dbReference>
<dbReference type="InterPro" id="IPR002528">
    <property type="entry name" value="MATE_fam"/>
</dbReference>
<dbReference type="NCBIfam" id="TIGR00797">
    <property type="entry name" value="matE"/>
    <property type="match status" value="1"/>
</dbReference>
<dbReference type="PANTHER" id="PTHR11206">
    <property type="entry name" value="MULTIDRUG RESISTANCE PROTEIN"/>
    <property type="match status" value="1"/>
</dbReference>
<dbReference type="Pfam" id="PF01554">
    <property type="entry name" value="MatE"/>
    <property type="match status" value="2"/>
</dbReference>
<organism>
    <name type="scientific">Arabidopsis thaliana</name>
    <name type="common">Mouse-ear cress</name>
    <dbReference type="NCBI Taxonomy" id="3702"/>
    <lineage>
        <taxon>Eukaryota</taxon>
        <taxon>Viridiplantae</taxon>
        <taxon>Streptophyta</taxon>
        <taxon>Embryophyta</taxon>
        <taxon>Tracheophyta</taxon>
        <taxon>Spermatophyta</taxon>
        <taxon>Magnoliopsida</taxon>
        <taxon>eudicotyledons</taxon>
        <taxon>Gunneridae</taxon>
        <taxon>Pentapetalae</taxon>
        <taxon>rosids</taxon>
        <taxon>malvids</taxon>
        <taxon>Brassicales</taxon>
        <taxon>Brassicaceae</taxon>
        <taxon>Camelineae</taxon>
        <taxon>Arabidopsis</taxon>
    </lineage>
</organism>
<keyword id="KW-1003">Cell membrane</keyword>
<keyword id="KW-0967">Endosome</keyword>
<keyword id="KW-0472">Membrane</keyword>
<keyword id="KW-1185">Reference proteome</keyword>
<keyword id="KW-0812">Transmembrane</keyword>
<keyword id="KW-1133">Transmembrane helix</keyword>
<keyword id="KW-0813">Transport</keyword>
<sequence>MSQSNRVRDEVTLPLLQKTSHLKNHSSVLSVFLNEAISICKISYPLVLTGLFLYVRSFVSLSFLGGLGDATLAGGSLAAAFANITGYSLFSGLTMGVESICSQAFGARRYNYVCASVKRGIILLLVTSLPVTLLWMNMEKILLILKQDKKLASEAHIFLLYSVPDLVAQSFLHPLRVYLRTQSKTLPLSICTVIASFLHLPITFFLVSYLGLGIKGIALSGVVSNFNLVAFLFLYICFFEDKLSVNEDEKITEETCEDSVREWKKLLCLAIPSCISVCLEWWCYEIMILLCGFLLDPKASVASMGILIQITSLVYIFPHSLSLGVSTRVGNELGSNQPKRARRAAIVGLGLSIALGFTAFAFTVSVRNTWAMFFTDDKEIMKLTAMALPIVGLCELGNCPQTTGCGVLRGSARPKIGANINGVAFYAVGIPVGAVLAFWFGFGFKGLWLGMLAAQITCVIGMMAATCRTDWELEAERAKVLTTAVDCGSSDDDAKEDMEAGMVDK</sequence>
<proteinExistence type="evidence at transcript level"/>
<protein>
    <recommendedName>
        <fullName evidence="4">Protein DETOXIFICATION 50</fullName>
        <shortName evidence="4">AtDTX50</shortName>
    </recommendedName>
    <alternativeName>
        <fullName evidence="5">DETOXIFICATION EFFLUX CARRIER 50</fullName>
    </alternativeName>
    <alternativeName>
        <fullName evidence="7">Multidrug and toxic compound extrusion protein 50</fullName>
        <shortName evidence="7">MATE protein 50</shortName>
    </alternativeName>
    <alternativeName>
        <fullName evidence="6">Protein ABNORMAL SHOOT 3-like 1</fullName>
    </alternativeName>
</protein>
<name>DTX50_ARATH</name>
<reference key="1">
    <citation type="journal article" date="1998" name="DNA Res.">
        <title>Structural analysis of Arabidopsis thaliana chromosome 5. VII. Sequence features of the regions of 1,013,767 bp covered by sixteen physically assigned P1 and TAC clones.</title>
        <authorList>
            <person name="Nakamura Y."/>
            <person name="Sato S."/>
            <person name="Asamizu E."/>
            <person name="Kaneko T."/>
            <person name="Kotani H."/>
            <person name="Miyajima N."/>
            <person name="Tabata S."/>
        </authorList>
    </citation>
    <scope>NUCLEOTIDE SEQUENCE [LARGE SCALE GENOMIC DNA]</scope>
    <source>
        <strain>cv. Columbia</strain>
    </source>
</reference>
<reference key="2">
    <citation type="journal article" date="2017" name="Plant J.">
        <title>Araport11: a complete reannotation of the Arabidopsis thaliana reference genome.</title>
        <authorList>
            <person name="Cheng C.Y."/>
            <person name="Krishnakumar V."/>
            <person name="Chan A.P."/>
            <person name="Thibaud-Nissen F."/>
            <person name="Schobel S."/>
            <person name="Town C.D."/>
        </authorList>
    </citation>
    <scope>GENOME REANNOTATION</scope>
    <source>
        <strain>cv. Columbia</strain>
    </source>
</reference>
<reference key="3">
    <citation type="journal article" date="2002" name="Science">
        <title>Functional annotation of a full-length Arabidopsis cDNA collection.</title>
        <authorList>
            <person name="Seki M."/>
            <person name="Narusaka M."/>
            <person name="Kamiya A."/>
            <person name="Ishida J."/>
            <person name="Satou M."/>
            <person name="Sakurai T."/>
            <person name="Nakajima M."/>
            <person name="Enju A."/>
            <person name="Akiyama K."/>
            <person name="Oono Y."/>
            <person name="Muramatsu M."/>
            <person name="Hayashizaki Y."/>
            <person name="Kawai J."/>
            <person name="Carninci P."/>
            <person name="Itoh M."/>
            <person name="Ishii Y."/>
            <person name="Arakawa T."/>
            <person name="Shibata K."/>
            <person name="Shinagawa A."/>
            <person name="Shinozaki K."/>
        </authorList>
    </citation>
    <scope>NUCLEOTIDE SEQUENCE [LARGE SCALE MRNA]</scope>
    <source>
        <strain>cv. Columbia</strain>
    </source>
</reference>
<reference key="4">
    <citation type="journal article" date="2002" name="J. Biol. Chem.">
        <title>Functional cloning and characterization of a plant efflux carrier for multidrug and heavy metal detoxification.</title>
        <authorList>
            <person name="Li L."/>
            <person name="He Z."/>
            <person name="Pandey G.K."/>
            <person name="Tsuchiya T."/>
            <person name="Luan S."/>
        </authorList>
    </citation>
    <scope>GENE FAMILY</scope>
    <scope>NOMENCLATURE</scope>
</reference>
<reference key="5">
    <citation type="journal article" date="2003" name="Eur. J. Biochem.">
        <title>The multidrug/oligosaccharidyl-lipid/polysaccharide (MOP) exporter superfamily.</title>
        <authorList>
            <person name="Hvorup R.N."/>
            <person name="Winnen B."/>
            <person name="Chang A.B."/>
            <person name="Jiang Y."/>
            <person name="Zhou X.F."/>
            <person name="Saier M.H. Jr."/>
        </authorList>
    </citation>
    <scope>GENE FAMILY</scope>
</reference>
<reference key="6">
    <citation type="journal article" date="2014" name="Mol. Plant">
        <title>A DTX/MATE-type transporter facilitates abscisic acid efflux and modulates ABA sensitivity and drought tolerance in Arabidopsis.</title>
        <authorList>
            <person name="Zhang H."/>
            <person name="Zhu H."/>
            <person name="Pan Y."/>
            <person name="Yu Y."/>
            <person name="Luan S."/>
            <person name="Li L."/>
        </authorList>
    </citation>
    <scope>FUNCTION</scope>
    <scope>TISSUE SPECIFICITY</scope>
    <scope>INDUCTION BY ABA</scope>
    <scope>SUBCELLULAR LOCATION</scope>
    <scope>DISRUPTION PHENOTYPE</scope>
</reference>
<reference key="7">
    <citation type="journal article" date="2015" name="J. Exp. Bot.">
        <title>A subgroup of MATE transporter genes regulates hypocotyl cell elongation in Arabidopsis.</title>
        <authorList>
            <person name="Wang R."/>
            <person name="Liu X."/>
            <person name="Liang S."/>
            <person name="Ge Q."/>
            <person name="Li Y."/>
            <person name="Shao J."/>
            <person name="Qi Y."/>
            <person name="An L."/>
            <person name="Yu F."/>
        </authorList>
    </citation>
    <scope>TISSUE SPECIFICITY</scope>
    <scope>SUBCELLULAR LOCATION</scope>
    <scope>FUNCTION</scope>
</reference>
<feature type="chain" id="PRO_0000434084" description="Protein DETOXIFICATION 50">
    <location>
        <begin position="1"/>
        <end position="505"/>
    </location>
</feature>
<feature type="transmembrane region" description="Helical" evidence="1">
    <location>
        <begin position="46"/>
        <end position="66"/>
    </location>
</feature>
<feature type="transmembrane region" description="Helical" evidence="1">
    <location>
        <begin position="78"/>
        <end position="98"/>
    </location>
</feature>
<feature type="transmembrane region" description="Helical" evidence="1">
    <location>
        <begin position="121"/>
        <end position="141"/>
    </location>
</feature>
<feature type="transmembrane region" description="Helical" evidence="1">
    <location>
        <begin position="155"/>
        <end position="175"/>
    </location>
</feature>
<feature type="transmembrane region" description="Helical" evidence="1">
    <location>
        <begin position="194"/>
        <end position="214"/>
    </location>
</feature>
<feature type="transmembrane region" description="Helical" evidence="1">
    <location>
        <begin position="219"/>
        <end position="239"/>
    </location>
</feature>
<feature type="transmembrane region" description="Helical" evidence="1">
    <location>
        <begin position="275"/>
        <end position="295"/>
    </location>
</feature>
<feature type="transmembrane region" description="Helical" evidence="1">
    <location>
        <begin position="305"/>
        <end position="325"/>
    </location>
</feature>
<feature type="transmembrane region" description="Helical" evidence="1">
    <location>
        <begin position="344"/>
        <end position="364"/>
    </location>
</feature>
<feature type="transmembrane region" description="Helical" evidence="1">
    <location>
        <begin position="380"/>
        <end position="400"/>
    </location>
</feature>
<feature type="transmembrane region" description="Helical" evidence="1">
    <location>
        <begin position="424"/>
        <end position="444"/>
    </location>
</feature>
<feature type="transmembrane region" description="Helical" evidence="1">
    <location>
        <begin position="446"/>
        <end position="466"/>
    </location>
</feature>
<feature type="sequence conflict" description="In Ref. 3; BAC42620." evidence="7" ref="3">
    <original>G</original>
    <variation>V</variation>
    <location>
        <position position="348"/>
    </location>
</feature>
<gene>
    <name evidence="4" type="primary">DTX50</name>
    <name evidence="6" type="synonym">ABS3L1</name>
    <name evidence="8" type="ordered locus">At5g52050</name>
    <name evidence="9" type="ORF">MSG15.13</name>
</gene>